<organism>
    <name type="scientific">Mycobacterium tuberculosis (strain CDC 1551 / Oshkosh)</name>
    <dbReference type="NCBI Taxonomy" id="83331"/>
    <lineage>
        <taxon>Bacteria</taxon>
        <taxon>Bacillati</taxon>
        <taxon>Actinomycetota</taxon>
        <taxon>Actinomycetes</taxon>
        <taxon>Mycobacteriales</taxon>
        <taxon>Mycobacteriaceae</taxon>
        <taxon>Mycobacterium</taxon>
        <taxon>Mycobacterium tuberculosis complex</taxon>
    </lineage>
</organism>
<dbReference type="EC" id="6.3.4.4" evidence="1"/>
<dbReference type="EMBL" id="AE000516">
    <property type="protein sequence ID" value="AAK44594.1"/>
    <property type="molecule type" value="Genomic_DNA"/>
</dbReference>
<dbReference type="PIR" id="F70575">
    <property type="entry name" value="F70575"/>
</dbReference>
<dbReference type="RefSeq" id="WP_003401829.1">
    <property type="nucleotide sequence ID" value="NZ_KK341227.1"/>
</dbReference>
<dbReference type="SMR" id="P9WHN2"/>
<dbReference type="KEGG" id="mtc:MT0373"/>
<dbReference type="PATRIC" id="fig|83331.31.peg.396"/>
<dbReference type="HOGENOM" id="CLU_029848_0_0_11"/>
<dbReference type="UniPathway" id="UPA00075">
    <property type="reaction ID" value="UER00335"/>
</dbReference>
<dbReference type="Proteomes" id="UP000001020">
    <property type="component" value="Chromosome"/>
</dbReference>
<dbReference type="GO" id="GO:0005737">
    <property type="term" value="C:cytoplasm"/>
    <property type="evidence" value="ECO:0007669"/>
    <property type="project" value="UniProtKB-SubCell"/>
</dbReference>
<dbReference type="GO" id="GO:0004019">
    <property type="term" value="F:adenylosuccinate synthase activity"/>
    <property type="evidence" value="ECO:0007669"/>
    <property type="project" value="UniProtKB-UniRule"/>
</dbReference>
<dbReference type="GO" id="GO:0005525">
    <property type="term" value="F:GTP binding"/>
    <property type="evidence" value="ECO:0007669"/>
    <property type="project" value="UniProtKB-UniRule"/>
</dbReference>
<dbReference type="GO" id="GO:0000287">
    <property type="term" value="F:magnesium ion binding"/>
    <property type="evidence" value="ECO:0007669"/>
    <property type="project" value="UniProtKB-UniRule"/>
</dbReference>
<dbReference type="GO" id="GO:0044208">
    <property type="term" value="P:'de novo' AMP biosynthetic process"/>
    <property type="evidence" value="ECO:0007669"/>
    <property type="project" value="UniProtKB-UniRule"/>
</dbReference>
<dbReference type="GO" id="GO:0046040">
    <property type="term" value="P:IMP metabolic process"/>
    <property type="evidence" value="ECO:0007669"/>
    <property type="project" value="TreeGrafter"/>
</dbReference>
<dbReference type="CDD" id="cd03108">
    <property type="entry name" value="AdSS"/>
    <property type="match status" value="1"/>
</dbReference>
<dbReference type="FunFam" id="1.10.300.10:FF:000001">
    <property type="entry name" value="Adenylosuccinate synthetase"/>
    <property type="match status" value="1"/>
</dbReference>
<dbReference type="FunFam" id="3.90.170.10:FF:000001">
    <property type="entry name" value="Adenylosuccinate synthetase"/>
    <property type="match status" value="1"/>
</dbReference>
<dbReference type="Gene3D" id="3.40.440.10">
    <property type="entry name" value="Adenylosuccinate Synthetase, subunit A, domain 1"/>
    <property type="match status" value="1"/>
</dbReference>
<dbReference type="Gene3D" id="1.10.300.10">
    <property type="entry name" value="Adenylosuccinate Synthetase, subunit A, domain 2"/>
    <property type="match status" value="1"/>
</dbReference>
<dbReference type="Gene3D" id="3.90.170.10">
    <property type="entry name" value="Adenylosuccinate Synthetase, subunit A, domain 3"/>
    <property type="match status" value="1"/>
</dbReference>
<dbReference type="HAMAP" id="MF_00011">
    <property type="entry name" value="Adenylosucc_synth"/>
    <property type="match status" value="1"/>
</dbReference>
<dbReference type="InterPro" id="IPR018220">
    <property type="entry name" value="Adenylosuccin_syn_GTP-bd"/>
</dbReference>
<dbReference type="InterPro" id="IPR033128">
    <property type="entry name" value="Adenylosuccin_syn_Lys_AS"/>
</dbReference>
<dbReference type="InterPro" id="IPR042109">
    <property type="entry name" value="Adenylosuccinate_synth_dom1"/>
</dbReference>
<dbReference type="InterPro" id="IPR042110">
    <property type="entry name" value="Adenylosuccinate_synth_dom2"/>
</dbReference>
<dbReference type="InterPro" id="IPR042111">
    <property type="entry name" value="Adenylosuccinate_synth_dom3"/>
</dbReference>
<dbReference type="InterPro" id="IPR001114">
    <property type="entry name" value="Adenylosuccinate_synthetase"/>
</dbReference>
<dbReference type="InterPro" id="IPR027417">
    <property type="entry name" value="P-loop_NTPase"/>
</dbReference>
<dbReference type="NCBIfam" id="NF002223">
    <property type="entry name" value="PRK01117.1"/>
    <property type="match status" value="1"/>
</dbReference>
<dbReference type="NCBIfam" id="TIGR00184">
    <property type="entry name" value="purA"/>
    <property type="match status" value="1"/>
</dbReference>
<dbReference type="PANTHER" id="PTHR11846">
    <property type="entry name" value="ADENYLOSUCCINATE SYNTHETASE"/>
    <property type="match status" value="1"/>
</dbReference>
<dbReference type="PANTHER" id="PTHR11846:SF0">
    <property type="entry name" value="ADENYLOSUCCINATE SYNTHETASE"/>
    <property type="match status" value="1"/>
</dbReference>
<dbReference type="Pfam" id="PF00709">
    <property type="entry name" value="Adenylsucc_synt"/>
    <property type="match status" value="1"/>
</dbReference>
<dbReference type="SMART" id="SM00788">
    <property type="entry name" value="Adenylsucc_synt"/>
    <property type="match status" value="1"/>
</dbReference>
<dbReference type="SUPFAM" id="SSF52540">
    <property type="entry name" value="P-loop containing nucleoside triphosphate hydrolases"/>
    <property type="match status" value="1"/>
</dbReference>
<dbReference type="PROSITE" id="PS01266">
    <property type="entry name" value="ADENYLOSUCCIN_SYN_1"/>
    <property type="match status" value="1"/>
</dbReference>
<dbReference type="PROSITE" id="PS00513">
    <property type="entry name" value="ADENYLOSUCCIN_SYN_2"/>
    <property type="match status" value="1"/>
</dbReference>
<protein>
    <recommendedName>
        <fullName evidence="1">Adenylosuccinate synthetase</fullName>
        <shortName evidence="1">AMPSase</shortName>
        <shortName evidence="1">AdSS</shortName>
        <ecNumber evidence="1">6.3.4.4</ecNumber>
    </recommendedName>
    <alternativeName>
        <fullName evidence="1">IMP--aspartate ligase</fullName>
    </alternativeName>
</protein>
<evidence type="ECO:0000255" key="1">
    <source>
        <dbReference type="HAMAP-Rule" id="MF_00011"/>
    </source>
</evidence>
<reference key="1">
    <citation type="journal article" date="2002" name="J. Bacteriol.">
        <title>Whole-genome comparison of Mycobacterium tuberculosis clinical and laboratory strains.</title>
        <authorList>
            <person name="Fleischmann R.D."/>
            <person name="Alland D."/>
            <person name="Eisen J.A."/>
            <person name="Carpenter L."/>
            <person name="White O."/>
            <person name="Peterson J.D."/>
            <person name="DeBoy R.T."/>
            <person name="Dodson R.J."/>
            <person name="Gwinn M.L."/>
            <person name="Haft D.H."/>
            <person name="Hickey E.K."/>
            <person name="Kolonay J.F."/>
            <person name="Nelson W.C."/>
            <person name="Umayam L.A."/>
            <person name="Ermolaeva M.D."/>
            <person name="Salzberg S.L."/>
            <person name="Delcher A."/>
            <person name="Utterback T.R."/>
            <person name="Weidman J.F."/>
            <person name="Khouri H.M."/>
            <person name="Gill J."/>
            <person name="Mikula A."/>
            <person name="Bishai W."/>
            <person name="Jacobs W.R. Jr."/>
            <person name="Venter J.C."/>
            <person name="Fraser C.M."/>
        </authorList>
    </citation>
    <scope>NUCLEOTIDE SEQUENCE [LARGE SCALE GENOMIC DNA]</scope>
    <source>
        <strain>CDC 1551 / Oshkosh</strain>
    </source>
</reference>
<gene>
    <name evidence="1" type="primary">purA</name>
    <name type="ordered locus">MT0373</name>
</gene>
<accession>P9WHN2</accession>
<accession>L0T6F4</accession>
<accession>O08381</accession>
<accession>P65880</accession>
<proteinExistence type="inferred from homology"/>
<keyword id="KW-0963">Cytoplasm</keyword>
<keyword id="KW-0342">GTP-binding</keyword>
<keyword id="KW-0436">Ligase</keyword>
<keyword id="KW-0460">Magnesium</keyword>
<keyword id="KW-0479">Metal-binding</keyword>
<keyword id="KW-0547">Nucleotide-binding</keyword>
<keyword id="KW-0658">Purine biosynthesis</keyword>
<keyword id="KW-1185">Reference proteome</keyword>
<sequence>MPAIVLIGAQWGDEGKGKATDLLGGRVQWVVRYQGGNNAGHTVVLPTGENFALHLIPSGVLTPGVTNVIGNGVVIDPGVLLNELRGLQDRGVDTAKLLISADAHLLMPYHIAIDKVTERYMGSKKIGTTGRGIGPCYQDKIARIGIRVADVLDPEQLTHKVEAACEFKNQVLVKIYNRKALDPAQVVDALLEQAEGFKHRIADTRLLLNAALEAGETVLLEGSQGTLLDVDHGTYPYVTSSNPTAGGAAVGSGIGPTRIGTVLGILKAYTTRVGSGPFPTELFDEHGEYLSKTGREFGVTTGRRRRCGWFDAVIARYAARVNGITDYFLTKLDVLSSLESVPVCVGYEIDGRRTRDMPMTQRDLCRAKPVYEELPGWWEDISGAREFDDLPAKARDYVLRLEQLAGAPVSCIGVGPGREQTIVRRDVLQDRP</sequence>
<name>PURA_MYCTO</name>
<feature type="chain" id="PRO_0000428155" description="Adenylosuccinate synthetase">
    <location>
        <begin position="1"/>
        <end position="432"/>
    </location>
</feature>
<feature type="active site" description="Proton acceptor" evidence="1">
    <location>
        <position position="13"/>
    </location>
</feature>
<feature type="active site" description="Proton donor" evidence="1">
    <location>
        <position position="41"/>
    </location>
</feature>
<feature type="binding site" evidence="1">
    <location>
        <begin position="12"/>
        <end position="18"/>
    </location>
    <ligand>
        <name>GTP</name>
        <dbReference type="ChEBI" id="CHEBI:37565"/>
    </ligand>
</feature>
<feature type="binding site" description="in other chain" evidence="1">
    <location>
        <begin position="13"/>
        <end position="16"/>
    </location>
    <ligand>
        <name>IMP</name>
        <dbReference type="ChEBI" id="CHEBI:58053"/>
        <note>ligand shared between dimeric partners</note>
    </ligand>
</feature>
<feature type="binding site" evidence="1">
    <location>
        <position position="13"/>
    </location>
    <ligand>
        <name>Mg(2+)</name>
        <dbReference type="ChEBI" id="CHEBI:18420"/>
    </ligand>
</feature>
<feature type="binding site" description="in other chain" evidence="1">
    <location>
        <begin position="38"/>
        <end position="41"/>
    </location>
    <ligand>
        <name>IMP</name>
        <dbReference type="ChEBI" id="CHEBI:58053"/>
        <note>ligand shared between dimeric partners</note>
    </ligand>
</feature>
<feature type="binding site" evidence="1">
    <location>
        <begin position="40"/>
        <end position="42"/>
    </location>
    <ligand>
        <name>GTP</name>
        <dbReference type="ChEBI" id="CHEBI:37565"/>
    </ligand>
</feature>
<feature type="binding site" evidence="1">
    <location>
        <position position="40"/>
    </location>
    <ligand>
        <name>Mg(2+)</name>
        <dbReference type="ChEBI" id="CHEBI:18420"/>
    </ligand>
</feature>
<feature type="binding site" description="in other chain" evidence="1">
    <location>
        <position position="129"/>
    </location>
    <ligand>
        <name>IMP</name>
        <dbReference type="ChEBI" id="CHEBI:58053"/>
        <note>ligand shared between dimeric partners</note>
    </ligand>
</feature>
<feature type="binding site" evidence="1">
    <location>
        <position position="143"/>
    </location>
    <ligand>
        <name>IMP</name>
        <dbReference type="ChEBI" id="CHEBI:58053"/>
        <note>ligand shared between dimeric partners</note>
    </ligand>
</feature>
<feature type="binding site" description="in other chain" evidence="1">
    <location>
        <position position="224"/>
    </location>
    <ligand>
        <name>IMP</name>
        <dbReference type="ChEBI" id="CHEBI:58053"/>
        <note>ligand shared between dimeric partners</note>
    </ligand>
</feature>
<feature type="binding site" description="in other chain" evidence="1">
    <location>
        <position position="239"/>
    </location>
    <ligand>
        <name>IMP</name>
        <dbReference type="ChEBI" id="CHEBI:58053"/>
        <note>ligand shared between dimeric partners</note>
    </ligand>
</feature>
<feature type="binding site" evidence="1">
    <location>
        <begin position="299"/>
        <end position="305"/>
    </location>
    <ligand>
        <name>substrate</name>
    </ligand>
</feature>
<feature type="binding site" description="in other chain" evidence="1">
    <location>
        <position position="303"/>
    </location>
    <ligand>
        <name>IMP</name>
        <dbReference type="ChEBI" id="CHEBI:58053"/>
        <note>ligand shared between dimeric partners</note>
    </ligand>
</feature>
<feature type="binding site" evidence="1">
    <location>
        <position position="305"/>
    </location>
    <ligand>
        <name>GTP</name>
        <dbReference type="ChEBI" id="CHEBI:37565"/>
    </ligand>
</feature>
<feature type="binding site" evidence="1">
    <location>
        <begin position="331"/>
        <end position="333"/>
    </location>
    <ligand>
        <name>GTP</name>
        <dbReference type="ChEBI" id="CHEBI:37565"/>
    </ligand>
</feature>
<feature type="binding site" evidence="1">
    <location>
        <begin position="413"/>
        <end position="415"/>
    </location>
    <ligand>
        <name>GTP</name>
        <dbReference type="ChEBI" id="CHEBI:37565"/>
    </ligand>
</feature>
<comment type="function">
    <text evidence="1">Plays an important role in the de novo pathway of purine nucleotide biosynthesis. Catalyzes the first committed step in the biosynthesis of AMP from IMP.</text>
</comment>
<comment type="catalytic activity">
    <reaction evidence="1">
        <text>IMP + L-aspartate + GTP = N(6)-(1,2-dicarboxyethyl)-AMP + GDP + phosphate + 2 H(+)</text>
        <dbReference type="Rhea" id="RHEA:15753"/>
        <dbReference type="ChEBI" id="CHEBI:15378"/>
        <dbReference type="ChEBI" id="CHEBI:29991"/>
        <dbReference type="ChEBI" id="CHEBI:37565"/>
        <dbReference type="ChEBI" id="CHEBI:43474"/>
        <dbReference type="ChEBI" id="CHEBI:57567"/>
        <dbReference type="ChEBI" id="CHEBI:58053"/>
        <dbReference type="ChEBI" id="CHEBI:58189"/>
        <dbReference type="EC" id="6.3.4.4"/>
    </reaction>
</comment>
<comment type="cofactor">
    <cofactor evidence="1">
        <name>Mg(2+)</name>
        <dbReference type="ChEBI" id="CHEBI:18420"/>
    </cofactor>
    <text evidence="1">Binds 1 Mg(2+) ion per subunit.</text>
</comment>
<comment type="pathway">
    <text evidence="1">Purine metabolism; AMP biosynthesis via de novo pathway; AMP from IMP: step 1/2.</text>
</comment>
<comment type="subunit">
    <text evidence="1">Homodimer.</text>
</comment>
<comment type="subcellular location">
    <subcellularLocation>
        <location evidence="1">Cytoplasm</location>
    </subcellularLocation>
</comment>
<comment type="similarity">
    <text evidence="1">Belongs to the adenylosuccinate synthetase family.</text>
</comment>